<accession>P23588</accession>
<accession>B4DS13</accession>
<accession>Q4G0E3</accession>
<accession>Q53HQ2</accession>
<accession>Q6GPH5</accession>
<accession>Q6IB46</accession>
<accession>Q8WYK5</accession>
<proteinExistence type="evidence at protein level"/>
<comment type="function">
    <text>Required for the binding of mRNA to ribosomes. Functions in close association with EIF4-F and EIF4-A. Binds near the 5'-terminal cap of mRNA in presence of EIF-4F and ATP. Promotes the ATPase activity and the ATP-dependent RNA unwinding activity of both EIF4-A and EIF4-F.</text>
</comment>
<comment type="subunit">
    <text>Self-associates and interacts with EIF3 p170 subunit.</text>
</comment>
<comment type="interaction">
    <interactant intactId="EBI-970310">
        <id>P23588</id>
    </interactant>
    <interactant intactId="EBI-11954292">
        <id>Q86V38</id>
        <label>ATN1</label>
    </interactant>
    <organismsDiffer>false</organismsDiffer>
    <experiments>3</experiments>
</comment>
<comment type="interaction">
    <interactant intactId="EBI-970310">
        <id>P23588</id>
    </interactant>
    <interactant intactId="EBI-6875961">
        <id>P02489</id>
        <label>CRYAA</label>
    </interactant>
    <organismsDiffer>false</organismsDiffer>
    <experiments>3</experiments>
</comment>
<comment type="interaction">
    <interactant intactId="EBI-970310">
        <id>P23588</id>
    </interactant>
    <interactant intactId="EBI-2432309">
        <id>Q92876</id>
        <label>KLK6</label>
    </interactant>
    <organismsDiffer>false</organismsDiffer>
    <experiments>3</experiments>
</comment>
<comment type="interaction">
    <interactant intactId="EBI-970310">
        <id>P23588</id>
    </interactant>
    <interactant intactId="EBI-476768">
        <id>P53350</id>
        <label>PLK1</label>
    </interactant>
    <organismsDiffer>false</organismsDiffer>
    <experiments>3</experiments>
</comment>
<comment type="interaction">
    <interactant intactId="EBI-970310">
        <id>P23588</id>
    </interactant>
    <interactant intactId="EBI-717399">
        <id>Q9BSI4</id>
        <label>TINF2</label>
    </interactant>
    <organismsDiffer>false</organismsDiffer>
    <experiments>2</experiments>
</comment>
<comment type="alternative products">
    <event type="alternative splicing"/>
    <isoform>
        <id>P23588-1</id>
        <name>1</name>
        <sequence type="displayed"/>
    </isoform>
    <isoform>
        <id>P23588-2</id>
        <name>2</name>
        <sequence type="described" ref="VSP_057351"/>
    </isoform>
</comment>
<comment type="PTM">
    <text evidence="4 5">Phosphorylated at Ser-422 by RPS6KA1 and RPS6KB1; phosphorylation enhances the affinity of EIF4B for the EIF3 complex. In response to mTORC1 activation, RPS6KA1-mediated phosphorylation at 'Ser-406' and 'Ser-422' stimulates bicarbonate cotransporter SLC4A7 mRNA translation, increasing SLC4A7 protein abundance and function.</text>
</comment>
<dbReference type="EMBL" id="X55733">
    <property type="protein sequence ID" value="CAA39265.1"/>
    <property type="molecule type" value="Genomic_DNA"/>
</dbReference>
<dbReference type="EMBL" id="AB076839">
    <property type="protein sequence ID" value="BAB82380.1"/>
    <property type="molecule type" value="mRNA"/>
</dbReference>
<dbReference type="EMBL" id="AK299526">
    <property type="protein sequence ID" value="BAG61475.1"/>
    <property type="molecule type" value="mRNA"/>
</dbReference>
<dbReference type="EMBL" id="CR456958">
    <property type="protein sequence ID" value="CAG33239.1"/>
    <property type="molecule type" value="mRNA"/>
</dbReference>
<dbReference type="EMBL" id="AK222528">
    <property type="protein sequence ID" value="BAD96248.1"/>
    <property type="molecule type" value="mRNA"/>
</dbReference>
<dbReference type="EMBL" id="AC068888">
    <property type="status" value="NOT_ANNOTATED_CDS"/>
    <property type="molecule type" value="Genomic_DNA"/>
</dbReference>
<dbReference type="EMBL" id="CH471054">
    <property type="protein sequence ID" value="EAW96657.1"/>
    <property type="molecule type" value="Genomic_DNA"/>
</dbReference>
<dbReference type="EMBL" id="BC073139">
    <property type="protein sequence ID" value="AAH73139.1"/>
    <property type="molecule type" value="mRNA"/>
</dbReference>
<dbReference type="EMBL" id="BC073154">
    <property type="protein sequence ID" value="AAH73154.1"/>
    <property type="molecule type" value="mRNA"/>
</dbReference>
<dbReference type="EMBL" id="BC098437">
    <property type="protein sequence ID" value="AAH98437.1"/>
    <property type="molecule type" value="mRNA"/>
</dbReference>
<dbReference type="CCDS" id="CCDS41788.1">
    <molecule id="P23588-1"/>
</dbReference>
<dbReference type="CCDS" id="CCDS86303.1">
    <molecule id="P23588-2"/>
</dbReference>
<dbReference type="PIR" id="S12566">
    <property type="entry name" value="S12566"/>
</dbReference>
<dbReference type="RefSeq" id="NP_001317583.1">
    <molecule id="P23588-2"/>
    <property type="nucleotide sequence ID" value="NM_001330654.2"/>
</dbReference>
<dbReference type="RefSeq" id="NP_001408.2">
    <molecule id="P23588-1"/>
    <property type="nucleotide sequence ID" value="NM_001417.7"/>
</dbReference>
<dbReference type="PDB" id="1WI8">
    <property type="method" value="NMR"/>
    <property type="chains" value="A=88-178"/>
</dbReference>
<dbReference type="PDB" id="2J76">
    <property type="method" value="NMR"/>
    <property type="chains" value="E=77-176"/>
</dbReference>
<dbReference type="PDB" id="6FEC">
    <property type="method" value="EM"/>
    <property type="resolution" value="6.30 A"/>
    <property type="chains" value="u=1-611"/>
</dbReference>
<dbReference type="PDBsum" id="1WI8"/>
<dbReference type="PDBsum" id="2J76"/>
<dbReference type="PDBsum" id="6FEC"/>
<dbReference type="BMRB" id="P23588"/>
<dbReference type="EMDB" id="EMD-4242"/>
<dbReference type="SMR" id="P23588"/>
<dbReference type="BioGRID" id="108291">
    <property type="interactions" value="418"/>
</dbReference>
<dbReference type="FunCoup" id="P23588">
    <property type="interactions" value="2410"/>
</dbReference>
<dbReference type="IntAct" id="P23588">
    <property type="interactions" value="106"/>
</dbReference>
<dbReference type="MINT" id="P23588"/>
<dbReference type="STRING" id="9606.ENSP00000388806"/>
<dbReference type="ChEMBL" id="CHEMBL3308928"/>
<dbReference type="GlyCosmos" id="P23588">
    <property type="glycosylation" value="3 sites, 1 glycan"/>
</dbReference>
<dbReference type="GlyGen" id="P23588">
    <property type="glycosylation" value="13 sites, 1 O-linked glycan (13 sites)"/>
</dbReference>
<dbReference type="iPTMnet" id="P23588"/>
<dbReference type="PhosphoSitePlus" id="P23588"/>
<dbReference type="SwissPalm" id="P23588"/>
<dbReference type="BioMuta" id="EIF4B"/>
<dbReference type="DMDM" id="205371761"/>
<dbReference type="jPOST" id="P23588"/>
<dbReference type="MassIVE" id="P23588"/>
<dbReference type="PaxDb" id="9606-ENSP00000388806"/>
<dbReference type="PeptideAtlas" id="P23588"/>
<dbReference type="ProteomicsDB" id="4987"/>
<dbReference type="ProteomicsDB" id="54135">
    <molecule id="P23588-1"/>
</dbReference>
<dbReference type="Pumba" id="P23588"/>
<dbReference type="Antibodypedia" id="3427">
    <property type="antibodies" value="807 antibodies from 42 providers"/>
</dbReference>
<dbReference type="DNASU" id="1975"/>
<dbReference type="Ensembl" id="ENST00000262056.14">
    <molecule id="P23588-1"/>
    <property type="protein sequence ID" value="ENSP00000262056.9"/>
    <property type="gene ID" value="ENSG00000063046.18"/>
</dbReference>
<dbReference type="Ensembl" id="ENST00000416762.7">
    <molecule id="P23588-2"/>
    <property type="protein sequence ID" value="ENSP00000412530.3"/>
    <property type="gene ID" value="ENSG00000063046.18"/>
</dbReference>
<dbReference type="GeneID" id="1975"/>
<dbReference type="KEGG" id="hsa:1975"/>
<dbReference type="MANE-Select" id="ENST00000262056.14">
    <property type="protein sequence ID" value="ENSP00000262056.9"/>
    <property type="RefSeq nucleotide sequence ID" value="NM_001417.7"/>
    <property type="RefSeq protein sequence ID" value="NP_001408.2"/>
</dbReference>
<dbReference type="UCSC" id="uc001sbh.5">
    <molecule id="P23588-1"/>
    <property type="organism name" value="human"/>
</dbReference>
<dbReference type="AGR" id="HGNC:3285"/>
<dbReference type="CTD" id="1975"/>
<dbReference type="DisGeNET" id="1975"/>
<dbReference type="GeneCards" id="EIF4B"/>
<dbReference type="HGNC" id="HGNC:3285">
    <property type="gene designation" value="EIF4B"/>
</dbReference>
<dbReference type="HPA" id="ENSG00000063046">
    <property type="expression patterns" value="Low tissue specificity"/>
</dbReference>
<dbReference type="MIM" id="603928">
    <property type="type" value="gene"/>
</dbReference>
<dbReference type="neXtProt" id="NX_P23588"/>
<dbReference type="OpenTargets" id="ENSG00000063046"/>
<dbReference type="PharmGKB" id="PA27713"/>
<dbReference type="VEuPathDB" id="HostDB:ENSG00000063046"/>
<dbReference type="eggNOG" id="KOG0118">
    <property type="taxonomic scope" value="Eukaryota"/>
</dbReference>
<dbReference type="GeneTree" id="ENSGT00940000153336"/>
<dbReference type="HOGENOM" id="CLU_031798_0_0_1"/>
<dbReference type="InParanoid" id="P23588"/>
<dbReference type="OrthoDB" id="1748655at2759"/>
<dbReference type="PAN-GO" id="P23588">
    <property type="GO annotations" value="5 GO annotations based on evolutionary models"/>
</dbReference>
<dbReference type="PhylomeDB" id="P23588"/>
<dbReference type="TreeFam" id="TF101525"/>
<dbReference type="PathwayCommons" id="P23588"/>
<dbReference type="Reactome" id="R-HSA-156827">
    <property type="pathway name" value="L13a-mediated translational silencing of Ceruloplasmin expression"/>
</dbReference>
<dbReference type="Reactome" id="R-HSA-166208">
    <property type="pathway name" value="mTORC1-mediated signalling"/>
</dbReference>
<dbReference type="Reactome" id="R-HSA-429947">
    <property type="pathway name" value="Deadenylation of mRNA"/>
</dbReference>
<dbReference type="Reactome" id="R-HSA-72649">
    <property type="pathway name" value="Translation initiation complex formation"/>
</dbReference>
<dbReference type="Reactome" id="R-HSA-72662">
    <property type="pathway name" value="Activation of the mRNA upon binding of the cap-binding complex and eIFs, and subsequent binding to 43S"/>
</dbReference>
<dbReference type="Reactome" id="R-HSA-72702">
    <property type="pathway name" value="Ribosomal scanning and start codon recognition"/>
</dbReference>
<dbReference type="Reactome" id="R-HSA-72706">
    <property type="pathway name" value="GTP hydrolysis and joining of the 60S ribosomal subunit"/>
</dbReference>
<dbReference type="Reactome" id="R-HSA-9820841">
    <property type="pathway name" value="M-decay: degradation of maternal mRNAs by maternally stored factors"/>
</dbReference>
<dbReference type="Reactome" id="R-HSA-9820865">
    <property type="pathway name" value="Z-decay: degradation of maternal mRNAs by zygotically expressed factors"/>
</dbReference>
<dbReference type="SignaLink" id="P23588"/>
<dbReference type="SIGNOR" id="P23588"/>
<dbReference type="BioGRID-ORCS" id="1975">
    <property type="hits" value="447 hits in 1157 CRISPR screens"/>
</dbReference>
<dbReference type="CD-CODE" id="DEE660B4">
    <property type="entry name" value="Stress granule"/>
</dbReference>
<dbReference type="ChiTaRS" id="EIF4B">
    <property type="organism name" value="human"/>
</dbReference>
<dbReference type="EvolutionaryTrace" id="P23588"/>
<dbReference type="GeneWiki" id="EIF4B"/>
<dbReference type="GenomeRNAi" id="1975"/>
<dbReference type="Pharos" id="P23588">
    <property type="development level" value="Tbio"/>
</dbReference>
<dbReference type="PRO" id="PR:P23588"/>
<dbReference type="Proteomes" id="UP000005640">
    <property type="component" value="Chromosome 12"/>
</dbReference>
<dbReference type="RNAct" id="P23588">
    <property type="molecule type" value="protein"/>
</dbReference>
<dbReference type="Bgee" id="ENSG00000063046">
    <property type="expression patterns" value="Expressed in calcaneal tendon and 221 other cell types or tissues"/>
</dbReference>
<dbReference type="ExpressionAtlas" id="P23588">
    <property type="expression patterns" value="baseline and differential"/>
</dbReference>
<dbReference type="GO" id="GO:0005829">
    <property type="term" value="C:cytosol"/>
    <property type="evidence" value="ECO:0000314"/>
    <property type="project" value="HPA"/>
</dbReference>
<dbReference type="GO" id="GO:0016281">
    <property type="term" value="C:eukaryotic translation initiation factor 4F complex"/>
    <property type="evidence" value="ECO:0000304"/>
    <property type="project" value="ProtInc"/>
</dbReference>
<dbReference type="GO" id="GO:0043024">
    <property type="term" value="F:ribosomal small subunit binding"/>
    <property type="evidence" value="ECO:0000318"/>
    <property type="project" value="GO_Central"/>
</dbReference>
<dbReference type="GO" id="GO:0003723">
    <property type="term" value="F:RNA binding"/>
    <property type="evidence" value="ECO:0007005"/>
    <property type="project" value="UniProtKB"/>
</dbReference>
<dbReference type="GO" id="GO:0033592">
    <property type="term" value="F:RNA strand annealing activity"/>
    <property type="evidence" value="ECO:0000318"/>
    <property type="project" value="GO_Central"/>
</dbReference>
<dbReference type="GO" id="GO:0034057">
    <property type="term" value="F:RNA strand-exchange activity"/>
    <property type="evidence" value="ECO:0000318"/>
    <property type="project" value="GO_Central"/>
</dbReference>
<dbReference type="GO" id="GO:0003743">
    <property type="term" value="F:translation initiation factor activity"/>
    <property type="evidence" value="ECO:0000304"/>
    <property type="project" value="ProtInc"/>
</dbReference>
<dbReference type="GO" id="GO:0097010">
    <property type="term" value="P:eukaryotic translation initiation factor 4F complex assembly"/>
    <property type="evidence" value="ECO:0000318"/>
    <property type="project" value="GO_Central"/>
</dbReference>
<dbReference type="GO" id="GO:0001731">
    <property type="term" value="P:formation of translation preinitiation complex"/>
    <property type="evidence" value="ECO:0000318"/>
    <property type="project" value="GO_Central"/>
</dbReference>
<dbReference type="GO" id="GO:0006446">
    <property type="term" value="P:regulation of translational initiation"/>
    <property type="evidence" value="ECO:0000304"/>
    <property type="project" value="ProtInc"/>
</dbReference>
<dbReference type="CDD" id="cd12402">
    <property type="entry name" value="RRM_eIF4B"/>
    <property type="match status" value="1"/>
</dbReference>
<dbReference type="FunFam" id="3.30.70.330:FF:000163">
    <property type="entry name" value="Eukaryotic translation initiation factor 4B"/>
    <property type="match status" value="1"/>
</dbReference>
<dbReference type="Gene3D" id="3.30.70.330">
    <property type="match status" value="1"/>
</dbReference>
<dbReference type="InterPro" id="IPR033107">
    <property type="entry name" value="EIF-4B_RRM"/>
</dbReference>
<dbReference type="InterPro" id="IPR012677">
    <property type="entry name" value="Nucleotide-bd_a/b_plait_sf"/>
</dbReference>
<dbReference type="InterPro" id="IPR035979">
    <property type="entry name" value="RBD_domain_sf"/>
</dbReference>
<dbReference type="InterPro" id="IPR000504">
    <property type="entry name" value="RRM_dom"/>
</dbReference>
<dbReference type="PANTHER" id="PTHR23236:SF2">
    <property type="entry name" value="EUKARYOTIC TRANSLATION INITIATION FACTOR 4B"/>
    <property type="match status" value="1"/>
</dbReference>
<dbReference type="PANTHER" id="PTHR23236">
    <property type="entry name" value="EUKARYOTIC TRANSLATION INITIATION FACTOR 4B/4H"/>
    <property type="match status" value="1"/>
</dbReference>
<dbReference type="Pfam" id="PF00076">
    <property type="entry name" value="RRM_1"/>
    <property type="match status" value="1"/>
</dbReference>
<dbReference type="SMART" id="SM00360">
    <property type="entry name" value="RRM"/>
    <property type="match status" value="1"/>
</dbReference>
<dbReference type="SUPFAM" id="SSF54928">
    <property type="entry name" value="RNA-binding domain, RBD"/>
    <property type="match status" value="1"/>
</dbReference>
<dbReference type="PROSITE" id="PS50102">
    <property type="entry name" value="RRM"/>
    <property type="match status" value="1"/>
</dbReference>
<keyword id="KW-0002">3D-structure</keyword>
<keyword id="KW-0007">Acetylation</keyword>
<keyword id="KW-0025">Alternative splicing</keyword>
<keyword id="KW-0903">Direct protein sequencing</keyword>
<keyword id="KW-0396">Initiation factor</keyword>
<keyword id="KW-1017">Isopeptide bond</keyword>
<keyword id="KW-0597">Phosphoprotein</keyword>
<keyword id="KW-0648">Protein biosynthesis</keyword>
<keyword id="KW-1267">Proteomics identification</keyword>
<keyword id="KW-1185">Reference proteome</keyword>
<keyword id="KW-0694">RNA-binding</keyword>
<keyword id="KW-0832">Ubl conjugation</keyword>
<evidence type="ECO:0000250" key="1">
    <source>
        <dbReference type="UniProtKB" id="Q8BGD9"/>
    </source>
</evidence>
<evidence type="ECO:0000255" key="2">
    <source>
        <dbReference type="PROSITE-ProRule" id="PRU00176"/>
    </source>
</evidence>
<evidence type="ECO:0000256" key="3">
    <source>
        <dbReference type="SAM" id="MobiDB-lite"/>
    </source>
</evidence>
<evidence type="ECO:0000269" key="4">
    <source>
    </source>
</evidence>
<evidence type="ECO:0000269" key="5">
    <source>
    </source>
</evidence>
<evidence type="ECO:0000269" key="6">
    <source>
    </source>
</evidence>
<evidence type="ECO:0000269" key="7">
    <source>
    </source>
</evidence>
<evidence type="ECO:0000303" key="8">
    <source>
    </source>
</evidence>
<evidence type="ECO:0000305" key="9"/>
<evidence type="ECO:0007744" key="10">
    <source>
    </source>
</evidence>
<evidence type="ECO:0007744" key="11">
    <source>
    </source>
</evidence>
<evidence type="ECO:0007744" key="12">
    <source>
    </source>
</evidence>
<evidence type="ECO:0007744" key="13">
    <source>
    </source>
</evidence>
<evidence type="ECO:0007744" key="14">
    <source>
    </source>
</evidence>
<evidence type="ECO:0007744" key="15">
    <source>
    </source>
</evidence>
<evidence type="ECO:0007744" key="16">
    <source>
    </source>
</evidence>
<evidence type="ECO:0007744" key="17">
    <source>
    </source>
</evidence>
<evidence type="ECO:0007744" key="18">
    <source>
    </source>
</evidence>
<evidence type="ECO:0007829" key="19">
    <source>
        <dbReference type="PDB" id="1WI8"/>
    </source>
</evidence>
<evidence type="ECO:0007829" key="20">
    <source>
        <dbReference type="PDB" id="2J76"/>
    </source>
</evidence>
<sequence>MAASAKKKNKKGKTISLTDFLAEDGGTGGGSTYVSKPVSWADETDDLEGDVSTTWHSNDDDVYRAPPIDRSILPTAPRAAREPNIDRSRLPKSPPYTAFLGNLPYDVTEESIKEFFRGLNISAVRLPREPSNPERLKGFGYAEFEDLDSLLSALSLNEESLGNRRIRVDVADQAQDKDRDDRSFGRDRNRDSDKTDTDWRARPATDSFDDYPPRRGDDSFGDKYRDRYDSDRYRDGYRDGYRDGPRRDMDRYGGRDRYDDRGSRDYDRGYDSRIGSGRRAFGSGYRRDDDYRGGGDRYEDRYDRRDDRSWSSRDDYSRDDYRRDDRGPPQRPKLNLKPRSTPKEDDSSASTSQSTRAASIFGGAKPVDTAAREREVEERLQKEQEKLQRQLDEPKLERRPRERHPSWRSEETQERERSRTGSESSQTGTSTTSSRNARRRESEKSLENETLNKEEDCHSPTSKPPKPDQPLKVMPAPPPKENAWVKRSSNPPARSQSSDTEQQSPTSGGGKVAPAQPSEEGPGRKDENKVDGMNAPKGQTGNSSRGPGDGGNRDHWKESDRKDGKKDQDSRSAPEPKKPEENPASKFSSASKYAALSVDGEDENEGEDYAE</sequence>
<name>IF4B_HUMAN</name>
<feature type="chain" id="PRO_0000081616" description="Eukaryotic translation initiation factor 4B">
    <location>
        <begin position="1"/>
        <end position="611"/>
    </location>
</feature>
<feature type="domain" description="RRM" evidence="2">
    <location>
        <begin position="96"/>
        <end position="173"/>
    </location>
</feature>
<feature type="region of interest" description="Disordered" evidence="3">
    <location>
        <begin position="1"/>
        <end position="37"/>
    </location>
</feature>
<feature type="region of interest" description="Disordered" evidence="3">
    <location>
        <begin position="66"/>
        <end position="93"/>
    </location>
</feature>
<feature type="region of interest" description="Disordered" evidence="3">
    <location>
        <begin position="173"/>
        <end position="611"/>
    </location>
</feature>
<feature type="compositionally biased region" description="Basic residues" evidence="3">
    <location>
        <begin position="1"/>
        <end position="13"/>
    </location>
</feature>
<feature type="compositionally biased region" description="Basic and acidic residues" evidence="3">
    <location>
        <begin position="79"/>
        <end position="89"/>
    </location>
</feature>
<feature type="compositionally biased region" description="Basic and acidic residues" evidence="3">
    <location>
        <begin position="173"/>
        <end position="203"/>
    </location>
</feature>
<feature type="compositionally biased region" description="Basic and acidic residues" evidence="3">
    <location>
        <begin position="211"/>
        <end position="271"/>
    </location>
</feature>
<feature type="compositionally biased region" description="Basic and acidic residues" evidence="3">
    <location>
        <begin position="285"/>
        <end position="328"/>
    </location>
</feature>
<feature type="compositionally biased region" description="Low complexity" evidence="3">
    <location>
        <begin position="348"/>
        <end position="359"/>
    </location>
</feature>
<feature type="compositionally biased region" description="Basic and acidic residues" evidence="3">
    <location>
        <begin position="370"/>
        <end position="420"/>
    </location>
</feature>
<feature type="compositionally biased region" description="Low complexity" evidence="3">
    <location>
        <begin position="421"/>
        <end position="435"/>
    </location>
</feature>
<feature type="compositionally biased region" description="Basic and acidic residues" evidence="3">
    <location>
        <begin position="439"/>
        <end position="458"/>
    </location>
</feature>
<feature type="compositionally biased region" description="Polar residues" evidence="3">
    <location>
        <begin position="487"/>
        <end position="506"/>
    </location>
</feature>
<feature type="compositionally biased region" description="Basic and acidic residues" evidence="3">
    <location>
        <begin position="521"/>
        <end position="530"/>
    </location>
</feature>
<feature type="compositionally biased region" description="Basic and acidic residues" evidence="3">
    <location>
        <begin position="551"/>
        <end position="583"/>
    </location>
</feature>
<feature type="compositionally biased region" description="Low complexity" evidence="3">
    <location>
        <begin position="584"/>
        <end position="597"/>
    </location>
</feature>
<feature type="compositionally biased region" description="Acidic residues" evidence="3">
    <location>
        <begin position="599"/>
        <end position="611"/>
    </location>
</feature>
<feature type="modified residue" description="Phosphoserine" evidence="11 14 16">
    <location>
        <position position="93"/>
    </location>
</feature>
<feature type="modified residue" description="Phosphoserine" evidence="14 16">
    <location>
        <position position="192"/>
    </location>
</feature>
<feature type="modified residue" description="Phosphoserine" evidence="16">
    <location>
        <position position="207"/>
    </location>
</feature>
<feature type="modified residue" description="Phosphoserine" evidence="11 14 16">
    <location>
        <position position="219"/>
    </location>
</feature>
<feature type="modified residue" description="Phosphoserine" evidence="11">
    <location>
        <position position="283"/>
    </location>
</feature>
<feature type="modified residue" description="Phosphoserine" evidence="16">
    <location>
        <position position="359"/>
    </location>
</feature>
<feature type="modified residue" description="N6-acetyllysine" evidence="1">
    <location>
        <position position="365"/>
    </location>
</feature>
<feature type="modified residue" description="Phosphoserine; by RPS6KA1" evidence="7 10 14 15 16">
    <location>
        <position position="406"/>
    </location>
</feature>
<feature type="modified residue" description="Phosphoserine" evidence="16">
    <location>
        <position position="409"/>
    </location>
</feature>
<feature type="modified residue" description="Phosphothreonine" evidence="15">
    <location>
        <position position="412"/>
    </location>
</feature>
<feature type="modified residue" description="Phosphoserine" evidence="15">
    <location>
        <position position="418"/>
    </location>
</feature>
<feature type="modified residue" description="Phosphoserine; by RPS6KA1 and RPS6KB1" evidence="4 5 7 14 16 17">
    <location>
        <position position="422"/>
    </location>
</feature>
<feature type="modified residue" description="Phosphoserine" evidence="15 17">
    <location>
        <position position="425"/>
    </location>
</feature>
<feature type="modified residue" description="Phosphoserine" evidence="10 14 15">
    <location>
        <position position="445"/>
    </location>
</feature>
<feature type="modified residue" description="Phosphoserine" evidence="11 17">
    <location>
        <position position="459"/>
    </location>
</feature>
<feature type="modified residue" description="Phosphoserine" evidence="17">
    <location>
        <position position="462"/>
    </location>
</feature>
<feature type="modified residue" description="Phosphoserine" evidence="1">
    <location>
        <position position="497"/>
    </location>
</feature>
<feature type="modified residue" description="Phosphoserine" evidence="14 15 17">
    <location>
        <position position="498"/>
    </location>
</feature>
<feature type="modified residue" description="Phosphothreonine" evidence="1">
    <location>
        <position position="500"/>
    </location>
</feature>
<feature type="modified residue" description="Phosphoserine" evidence="14 15 17">
    <location>
        <position position="504"/>
    </location>
</feature>
<feature type="modified residue" description="Phosphothreonine" evidence="1">
    <location>
        <position position="506"/>
    </location>
</feature>
<feature type="modified residue" description="N6-acetyllysine" evidence="12">
    <location>
        <position position="586"/>
    </location>
</feature>
<feature type="modified residue" description="Phosphoserine" evidence="11 13 14 15 16">
    <location>
        <position position="597"/>
    </location>
</feature>
<feature type="cross-link" description="Glycyl lysine isopeptide (Lys-Gly) (interchain with G-Cter in SUMO2)" evidence="18">
    <location>
        <position position="343"/>
    </location>
</feature>
<feature type="splice variant" id="VSP_057351" description="In isoform 2." evidence="8">
    <location>
        <begin position="121"/>
        <end position="159"/>
    </location>
</feature>
<feature type="sequence variant" id="VAR_064710" description="Found in a renal cell carcinoma case; somatic mutation." evidence="6">
    <original>P</original>
    <variation>R</variation>
    <location>
        <position position="203"/>
    </location>
</feature>
<feature type="mutagenesis site" description="Non-phosphorylatable mutant whose expression results in reduced SLC4A7 protein levels in TSC2-deficient cells accompanied by decrease in the bicarbonate-dependent flux into nucleotide synthesis." evidence="7">
    <original>S</original>
    <variation>A</variation>
    <location>
        <position position="406"/>
    </location>
</feature>
<feature type="mutagenesis site" description="Non-phosphorylatable mutant whose expression results in reduced SLC4A7 protein levels in TSC2-deficient cells accompanied by decrease in the bicarbonate-dependent flux into nucleotide synthesis." evidence="7">
    <original>S</original>
    <variation>A</variation>
    <location>
        <position position="422"/>
    </location>
</feature>
<feature type="sequence conflict" description="In Ref. 5; BAD96248." evidence="9" ref="5">
    <original>R</original>
    <variation>K</variation>
    <location>
        <position position="164"/>
    </location>
</feature>
<feature type="sequence conflict" description="In Ref. 8; AAH98437." evidence="9" ref="8">
    <original>R</original>
    <variation>C</variation>
    <location>
        <position position="246"/>
    </location>
</feature>
<feature type="sequence conflict" description="In Ref. 1; CAA39265." evidence="9" ref="1">
    <original>K</original>
    <variation>E</variation>
    <location>
        <position position="343"/>
    </location>
</feature>
<feature type="sequence conflict" description="In Ref. 1; CAA39265." evidence="9" ref="1">
    <original>LD</original>
    <variation>WN</variation>
    <location>
        <begin position="391"/>
        <end position="392"/>
    </location>
</feature>
<feature type="sequence conflict" description="In Ref. 8; AAH73154." evidence="9" ref="8">
    <original>L</original>
    <variation>Q</variation>
    <location>
        <position position="471"/>
    </location>
</feature>
<feature type="sequence conflict" description="In Ref. 5; BAD96248." evidence="9" ref="5">
    <original>K</original>
    <variation>R</variation>
    <location>
        <position position="486"/>
    </location>
</feature>
<feature type="sequence conflict" description="In Ref. 4; CAG33239." evidence="9" ref="4">
    <original>E</original>
    <variation>D</variation>
    <location>
        <position position="611"/>
    </location>
</feature>
<feature type="strand" evidence="19">
    <location>
        <begin position="92"/>
        <end position="94"/>
    </location>
</feature>
<feature type="strand" evidence="19">
    <location>
        <begin position="96"/>
        <end position="102"/>
    </location>
</feature>
<feature type="helix" evidence="19">
    <location>
        <begin position="109"/>
        <end position="115"/>
    </location>
</feature>
<feature type="turn" evidence="19">
    <location>
        <begin position="116"/>
        <end position="118"/>
    </location>
</feature>
<feature type="strand" evidence="19">
    <location>
        <begin position="121"/>
        <end position="125"/>
    </location>
</feature>
<feature type="turn" evidence="20">
    <location>
        <begin position="130"/>
        <end position="133"/>
    </location>
</feature>
<feature type="strand" evidence="19">
    <location>
        <begin position="140"/>
        <end position="146"/>
    </location>
</feature>
<feature type="helix" evidence="19">
    <location>
        <begin position="147"/>
        <end position="154"/>
    </location>
</feature>
<feature type="helix" evidence="19">
    <location>
        <begin position="155"/>
        <end position="157"/>
    </location>
</feature>
<feature type="strand" evidence="19">
    <location>
        <begin position="167"/>
        <end position="170"/>
    </location>
</feature>
<gene>
    <name type="primary">EIF4B</name>
</gene>
<organism>
    <name type="scientific">Homo sapiens</name>
    <name type="common">Human</name>
    <dbReference type="NCBI Taxonomy" id="9606"/>
    <lineage>
        <taxon>Eukaryota</taxon>
        <taxon>Metazoa</taxon>
        <taxon>Chordata</taxon>
        <taxon>Craniata</taxon>
        <taxon>Vertebrata</taxon>
        <taxon>Euteleostomi</taxon>
        <taxon>Mammalia</taxon>
        <taxon>Eutheria</taxon>
        <taxon>Euarchontoglires</taxon>
        <taxon>Primates</taxon>
        <taxon>Haplorrhini</taxon>
        <taxon>Catarrhini</taxon>
        <taxon>Hominidae</taxon>
        <taxon>Homo</taxon>
    </lineage>
</organism>
<protein>
    <recommendedName>
        <fullName>Eukaryotic translation initiation factor 4B</fullName>
        <shortName>eIF-4B</shortName>
    </recommendedName>
</protein>
<reference key="1">
    <citation type="journal article" date="1990" name="EMBO J.">
        <title>Cloning and expression of eukaryotic initiation factor 4B cDNA: sequence determination identifies a common RNA recognition motif.</title>
        <authorList>
            <person name="Milburn S.C."/>
            <person name="Hershey J.W.B."/>
            <person name="Davies M.V."/>
            <person name="Kelleher K."/>
            <person name="Kaufman R.J."/>
        </authorList>
    </citation>
    <scope>NUCLEOTIDE SEQUENCE [GENOMIC DNA]</scope>
    <scope>PARTIAL PROTEIN SEQUENCE</scope>
</reference>
<reference key="2">
    <citation type="submission" date="2001-12" db="EMBL/GenBank/DDBJ databases">
        <title>Human eukaryotic initiation factor 4B.</title>
        <authorList>
            <person name="Yokoyama K."/>
        </authorList>
    </citation>
    <scope>NUCLEOTIDE SEQUENCE [MRNA] (ISOFORM 1)</scope>
    <source>
        <tissue>Cervix carcinoma</tissue>
    </source>
</reference>
<reference key="3">
    <citation type="journal article" date="2004" name="Nat. Genet.">
        <title>Complete sequencing and characterization of 21,243 full-length human cDNAs.</title>
        <authorList>
            <person name="Ota T."/>
            <person name="Suzuki Y."/>
            <person name="Nishikawa T."/>
            <person name="Otsuki T."/>
            <person name="Sugiyama T."/>
            <person name="Irie R."/>
            <person name="Wakamatsu A."/>
            <person name="Hayashi K."/>
            <person name="Sato H."/>
            <person name="Nagai K."/>
            <person name="Kimura K."/>
            <person name="Makita H."/>
            <person name="Sekine M."/>
            <person name="Obayashi M."/>
            <person name="Nishi T."/>
            <person name="Shibahara T."/>
            <person name="Tanaka T."/>
            <person name="Ishii S."/>
            <person name="Yamamoto J."/>
            <person name="Saito K."/>
            <person name="Kawai Y."/>
            <person name="Isono Y."/>
            <person name="Nakamura Y."/>
            <person name="Nagahari K."/>
            <person name="Murakami K."/>
            <person name="Yasuda T."/>
            <person name="Iwayanagi T."/>
            <person name="Wagatsuma M."/>
            <person name="Shiratori A."/>
            <person name="Sudo H."/>
            <person name="Hosoiri T."/>
            <person name="Kaku Y."/>
            <person name="Kodaira H."/>
            <person name="Kondo H."/>
            <person name="Sugawara M."/>
            <person name="Takahashi M."/>
            <person name="Kanda K."/>
            <person name="Yokoi T."/>
            <person name="Furuya T."/>
            <person name="Kikkawa E."/>
            <person name="Omura Y."/>
            <person name="Abe K."/>
            <person name="Kamihara K."/>
            <person name="Katsuta N."/>
            <person name="Sato K."/>
            <person name="Tanikawa M."/>
            <person name="Yamazaki M."/>
            <person name="Ninomiya K."/>
            <person name="Ishibashi T."/>
            <person name="Yamashita H."/>
            <person name="Murakawa K."/>
            <person name="Fujimori K."/>
            <person name="Tanai H."/>
            <person name="Kimata M."/>
            <person name="Watanabe M."/>
            <person name="Hiraoka S."/>
            <person name="Chiba Y."/>
            <person name="Ishida S."/>
            <person name="Ono Y."/>
            <person name="Takiguchi S."/>
            <person name="Watanabe S."/>
            <person name="Yosida M."/>
            <person name="Hotuta T."/>
            <person name="Kusano J."/>
            <person name="Kanehori K."/>
            <person name="Takahashi-Fujii A."/>
            <person name="Hara H."/>
            <person name="Tanase T.-O."/>
            <person name="Nomura Y."/>
            <person name="Togiya S."/>
            <person name="Komai F."/>
            <person name="Hara R."/>
            <person name="Takeuchi K."/>
            <person name="Arita M."/>
            <person name="Imose N."/>
            <person name="Musashino K."/>
            <person name="Yuuki H."/>
            <person name="Oshima A."/>
            <person name="Sasaki N."/>
            <person name="Aotsuka S."/>
            <person name="Yoshikawa Y."/>
            <person name="Matsunawa H."/>
            <person name="Ichihara T."/>
            <person name="Shiohata N."/>
            <person name="Sano S."/>
            <person name="Moriya S."/>
            <person name="Momiyama H."/>
            <person name="Satoh N."/>
            <person name="Takami S."/>
            <person name="Terashima Y."/>
            <person name="Suzuki O."/>
            <person name="Nakagawa S."/>
            <person name="Senoh A."/>
            <person name="Mizoguchi H."/>
            <person name="Goto Y."/>
            <person name="Shimizu F."/>
            <person name="Wakebe H."/>
            <person name="Hishigaki H."/>
            <person name="Watanabe T."/>
            <person name="Sugiyama A."/>
            <person name="Takemoto M."/>
            <person name="Kawakami B."/>
            <person name="Yamazaki M."/>
            <person name="Watanabe K."/>
            <person name="Kumagai A."/>
            <person name="Itakura S."/>
            <person name="Fukuzumi Y."/>
            <person name="Fujimori Y."/>
            <person name="Komiyama M."/>
            <person name="Tashiro H."/>
            <person name="Tanigami A."/>
            <person name="Fujiwara T."/>
            <person name="Ono T."/>
            <person name="Yamada K."/>
            <person name="Fujii Y."/>
            <person name="Ozaki K."/>
            <person name="Hirao M."/>
            <person name="Ohmori Y."/>
            <person name="Kawabata A."/>
            <person name="Hikiji T."/>
            <person name="Kobatake N."/>
            <person name="Inagaki H."/>
            <person name="Ikema Y."/>
            <person name="Okamoto S."/>
            <person name="Okitani R."/>
            <person name="Kawakami T."/>
            <person name="Noguchi S."/>
            <person name="Itoh T."/>
            <person name="Shigeta K."/>
            <person name="Senba T."/>
            <person name="Matsumura K."/>
            <person name="Nakajima Y."/>
            <person name="Mizuno T."/>
            <person name="Morinaga M."/>
            <person name="Sasaki M."/>
            <person name="Togashi T."/>
            <person name="Oyama M."/>
            <person name="Hata H."/>
            <person name="Watanabe M."/>
            <person name="Komatsu T."/>
            <person name="Mizushima-Sugano J."/>
            <person name="Satoh T."/>
            <person name="Shirai Y."/>
            <person name="Takahashi Y."/>
            <person name="Nakagawa K."/>
            <person name="Okumura K."/>
            <person name="Nagase T."/>
            <person name="Nomura N."/>
            <person name="Kikuchi H."/>
            <person name="Masuho Y."/>
            <person name="Yamashita R."/>
            <person name="Nakai K."/>
            <person name="Yada T."/>
            <person name="Nakamura Y."/>
            <person name="Ohara O."/>
            <person name="Isogai T."/>
            <person name="Sugano S."/>
        </authorList>
    </citation>
    <scope>NUCLEOTIDE SEQUENCE [LARGE SCALE MRNA] (ISOFORM 2)</scope>
    <source>
        <tissue>Brain</tissue>
    </source>
</reference>
<reference key="4">
    <citation type="submission" date="2004-06" db="EMBL/GenBank/DDBJ databases">
        <title>Cloning of human full open reading frames in Gateway(TM) system entry vector (pDONR201).</title>
        <authorList>
            <person name="Ebert L."/>
            <person name="Schick M."/>
            <person name="Neubert P."/>
            <person name="Schatten R."/>
            <person name="Henze S."/>
            <person name="Korn B."/>
        </authorList>
    </citation>
    <scope>NUCLEOTIDE SEQUENCE [LARGE SCALE MRNA] (ISOFORM 1)</scope>
</reference>
<reference key="5">
    <citation type="submission" date="2005-04" db="EMBL/GenBank/DDBJ databases">
        <authorList>
            <person name="Suzuki Y."/>
            <person name="Sugano S."/>
            <person name="Totoki Y."/>
            <person name="Toyoda A."/>
            <person name="Takeda T."/>
            <person name="Sakaki Y."/>
            <person name="Tanaka A."/>
            <person name="Yokoyama S."/>
        </authorList>
    </citation>
    <scope>NUCLEOTIDE SEQUENCE [LARGE SCALE MRNA] (ISOFORM 1)</scope>
    <source>
        <tissue>Adipose tissue</tissue>
    </source>
</reference>
<reference key="6">
    <citation type="journal article" date="2006" name="Nature">
        <title>The finished DNA sequence of human chromosome 12.</title>
        <authorList>
            <person name="Scherer S.E."/>
            <person name="Muzny D.M."/>
            <person name="Buhay C.J."/>
            <person name="Chen R."/>
            <person name="Cree A."/>
            <person name="Ding Y."/>
            <person name="Dugan-Rocha S."/>
            <person name="Gill R."/>
            <person name="Gunaratne P."/>
            <person name="Harris R.A."/>
            <person name="Hawes A.C."/>
            <person name="Hernandez J."/>
            <person name="Hodgson A.V."/>
            <person name="Hume J."/>
            <person name="Jackson A."/>
            <person name="Khan Z.M."/>
            <person name="Kovar-Smith C."/>
            <person name="Lewis L.R."/>
            <person name="Lozado R.J."/>
            <person name="Metzker M.L."/>
            <person name="Milosavljevic A."/>
            <person name="Miner G.R."/>
            <person name="Montgomery K.T."/>
            <person name="Morgan M.B."/>
            <person name="Nazareth L.V."/>
            <person name="Scott G."/>
            <person name="Sodergren E."/>
            <person name="Song X.-Z."/>
            <person name="Steffen D."/>
            <person name="Lovering R.C."/>
            <person name="Wheeler D.A."/>
            <person name="Worley K.C."/>
            <person name="Yuan Y."/>
            <person name="Zhang Z."/>
            <person name="Adams C.Q."/>
            <person name="Ansari-Lari M.A."/>
            <person name="Ayele M."/>
            <person name="Brown M.J."/>
            <person name="Chen G."/>
            <person name="Chen Z."/>
            <person name="Clerc-Blankenburg K.P."/>
            <person name="Davis C."/>
            <person name="Delgado O."/>
            <person name="Dinh H.H."/>
            <person name="Draper H."/>
            <person name="Gonzalez-Garay M.L."/>
            <person name="Havlak P."/>
            <person name="Jackson L.R."/>
            <person name="Jacob L.S."/>
            <person name="Kelly S.H."/>
            <person name="Li L."/>
            <person name="Li Z."/>
            <person name="Liu J."/>
            <person name="Liu W."/>
            <person name="Lu J."/>
            <person name="Maheshwari M."/>
            <person name="Nguyen B.-V."/>
            <person name="Okwuonu G.O."/>
            <person name="Pasternak S."/>
            <person name="Perez L.M."/>
            <person name="Plopper F.J.H."/>
            <person name="Santibanez J."/>
            <person name="Shen H."/>
            <person name="Tabor P.E."/>
            <person name="Verduzco D."/>
            <person name="Waldron L."/>
            <person name="Wang Q."/>
            <person name="Williams G.A."/>
            <person name="Zhang J."/>
            <person name="Zhou J."/>
            <person name="Allen C.C."/>
            <person name="Amin A.G."/>
            <person name="Anyalebechi V."/>
            <person name="Bailey M."/>
            <person name="Barbaria J.A."/>
            <person name="Bimage K.E."/>
            <person name="Bryant N.P."/>
            <person name="Burch P.E."/>
            <person name="Burkett C.E."/>
            <person name="Burrell K.L."/>
            <person name="Calderon E."/>
            <person name="Cardenas V."/>
            <person name="Carter K."/>
            <person name="Casias K."/>
            <person name="Cavazos I."/>
            <person name="Cavazos S.R."/>
            <person name="Ceasar H."/>
            <person name="Chacko J."/>
            <person name="Chan S.N."/>
            <person name="Chavez D."/>
            <person name="Christopoulos C."/>
            <person name="Chu J."/>
            <person name="Cockrell R."/>
            <person name="Cox C.D."/>
            <person name="Dang M."/>
            <person name="Dathorne S.R."/>
            <person name="David R."/>
            <person name="Davis C.M."/>
            <person name="Davy-Carroll L."/>
            <person name="Deshazo D.R."/>
            <person name="Donlin J.E."/>
            <person name="D'Souza L."/>
            <person name="Eaves K.A."/>
            <person name="Egan A."/>
            <person name="Emery-Cohen A.J."/>
            <person name="Escotto M."/>
            <person name="Flagg N."/>
            <person name="Forbes L.D."/>
            <person name="Gabisi A.M."/>
            <person name="Garza M."/>
            <person name="Hamilton C."/>
            <person name="Henderson N."/>
            <person name="Hernandez O."/>
            <person name="Hines S."/>
            <person name="Hogues M.E."/>
            <person name="Huang M."/>
            <person name="Idlebird D.G."/>
            <person name="Johnson R."/>
            <person name="Jolivet A."/>
            <person name="Jones S."/>
            <person name="Kagan R."/>
            <person name="King L.M."/>
            <person name="Leal B."/>
            <person name="Lebow H."/>
            <person name="Lee S."/>
            <person name="LeVan J.M."/>
            <person name="Lewis L.C."/>
            <person name="London P."/>
            <person name="Lorensuhewa L.M."/>
            <person name="Loulseged H."/>
            <person name="Lovett D.A."/>
            <person name="Lucier A."/>
            <person name="Lucier R.L."/>
            <person name="Ma J."/>
            <person name="Madu R.C."/>
            <person name="Mapua P."/>
            <person name="Martindale A.D."/>
            <person name="Martinez E."/>
            <person name="Massey E."/>
            <person name="Mawhiney S."/>
            <person name="Meador M.G."/>
            <person name="Mendez S."/>
            <person name="Mercado C."/>
            <person name="Mercado I.C."/>
            <person name="Merritt C.E."/>
            <person name="Miner Z.L."/>
            <person name="Minja E."/>
            <person name="Mitchell T."/>
            <person name="Mohabbat F."/>
            <person name="Mohabbat K."/>
            <person name="Montgomery B."/>
            <person name="Moore N."/>
            <person name="Morris S."/>
            <person name="Munidasa M."/>
            <person name="Ngo R.N."/>
            <person name="Nguyen N.B."/>
            <person name="Nickerson E."/>
            <person name="Nwaokelemeh O.O."/>
            <person name="Nwokenkwo S."/>
            <person name="Obregon M."/>
            <person name="Oguh M."/>
            <person name="Oragunye N."/>
            <person name="Oviedo R.J."/>
            <person name="Parish B.J."/>
            <person name="Parker D.N."/>
            <person name="Parrish J."/>
            <person name="Parks K.L."/>
            <person name="Paul H.A."/>
            <person name="Payton B.A."/>
            <person name="Perez A."/>
            <person name="Perrin W."/>
            <person name="Pickens A."/>
            <person name="Primus E.L."/>
            <person name="Pu L.-L."/>
            <person name="Puazo M."/>
            <person name="Quiles M.M."/>
            <person name="Quiroz J.B."/>
            <person name="Rabata D."/>
            <person name="Reeves K."/>
            <person name="Ruiz S.J."/>
            <person name="Shao H."/>
            <person name="Sisson I."/>
            <person name="Sonaike T."/>
            <person name="Sorelle R.P."/>
            <person name="Sutton A.E."/>
            <person name="Svatek A.F."/>
            <person name="Svetz L.A."/>
            <person name="Tamerisa K.S."/>
            <person name="Taylor T.R."/>
            <person name="Teague B."/>
            <person name="Thomas N."/>
            <person name="Thorn R.D."/>
            <person name="Trejos Z.Y."/>
            <person name="Trevino B.K."/>
            <person name="Ukegbu O.N."/>
            <person name="Urban J.B."/>
            <person name="Vasquez L.I."/>
            <person name="Vera V.A."/>
            <person name="Villasana D.M."/>
            <person name="Wang L."/>
            <person name="Ward-Moore S."/>
            <person name="Warren J.T."/>
            <person name="Wei X."/>
            <person name="White F."/>
            <person name="Williamson A.L."/>
            <person name="Wleczyk R."/>
            <person name="Wooden H.S."/>
            <person name="Wooden S.H."/>
            <person name="Yen J."/>
            <person name="Yoon L."/>
            <person name="Yoon V."/>
            <person name="Zorrilla S.E."/>
            <person name="Nelson D."/>
            <person name="Kucherlapati R."/>
            <person name="Weinstock G."/>
            <person name="Gibbs R.A."/>
        </authorList>
    </citation>
    <scope>NUCLEOTIDE SEQUENCE [LARGE SCALE GENOMIC DNA]</scope>
</reference>
<reference key="7">
    <citation type="submission" date="2005-07" db="EMBL/GenBank/DDBJ databases">
        <authorList>
            <person name="Mural R.J."/>
            <person name="Istrail S."/>
            <person name="Sutton G.G."/>
            <person name="Florea L."/>
            <person name="Halpern A.L."/>
            <person name="Mobarry C.M."/>
            <person name="Lippert R."/>
            <person name="Walenz B."/>
            <person name="Shatkay H."/>
            <person name="Dew I."/>
            <person name="Miller J.R."/>
            <person name="Flanigan M.J."/>
            <person name="Edwards N.J."/>
            <person name="Bolanos R."/>
            <person name="Fasulo D."/>
            <person name="Halldorsson B.V."/>
            <person name="Hannenhalli S."/>
            <person name="Turner R."/>
            <person name="Yooseph S."/>
            <person name="Lu F."/>
            <person name="Nusskern D.R."/>
            <person name="Shue B.C."/>
            <person name="Zheng X.H."/>
            <person name="Zhong F."/>
            <person name="Delcher A.L."/>
            <person name="Huson D.H."/>
            <person name="Kravitz S.A."/>
            <person name="Mouchard L."/>
            <person name="Reinert K."/>
            <person name="Remington K.A."/>
            <person name="Clark A.G."/>
            <person name="Waterman M.S."/>
            <person name="Eichler E.E."/>
            <person name="Adams M.D."/>
            <person name="Hunkapiller M.W."/>
            <person name="Myers E.W."/>
            <person name="Venter J.C."/>
        </authorList>
    </citation>
    <scope>NUCLEOTIDE SEQUENCE [LARGE SCALE GENOMIC DNA]</scope>
</reference>
<reference key="8">
    <citation type="journal article" date="2004" name="Genome Res.">
        <title>The status, quality, and expansion of the NIH full-length cDNA project: the Mammalian Gene Collection (MGC).</title>
        <authorList>
            <consortium name="The MGC Project Team"/>
        </authorList>
    </citation>
    <scope>NUCLEOTIDE SEQUENCE [LARGE SCALE MRNA] (ISOFORM 1)</scope>
    <source>
        <tissue>Lung</tissue>
        <tissue>Testis</tissue>
        <tissue>Uterus</tissue>
    </source>
</reference>
<reference key="9">
    <citation type="submission" date="2008-03" db="UniProtKB">
        <authorList>
            <person name="Bienvenut W.V."/>
            <person name="Calvo F."/>
            <person name="Kolch W."/>
        </authorList>
    </citation>
    <scope>PROTEIN SEQUENCE OF 71-87; 118-135; 168-182; 189-225; 235-242; 340-372; 380-398; 473-486 AND 512-537</scope>
    <scope>IDENTIFICATION BY MASS SPECTROMETRY</scope>
    <source>
        <tissue>Cervix carcinoma</tissue>
    </source>
</reference>
<reference key="10">
    <citation type="journal article" date="1994" name="Mol. Cell. Biol.">
        <title>The translation initiation factor eIF-4B contains an RNA-binding region that is distinct and independent from its ribonucleoprotein consensus sequence.</title>
        <authorList>
            <person name="Methot N."/>
            <person name="Pause A."/>
            <person name="Hershey J.W."/>
            <person name="Sonenberg N."/>
        </authorList>
    </citation>
    <scope>CHARACTERIZATION</scope>
</reference>
<reference key="11">
    <citation type="journal article" date="1996" name="Mol. Cell. Biol.">
        <title>A region rich in aspartic acid, arginine, tyrosine, and glycine (DRYG) mediates eukaryotic initiation factor 4B (eIF4B) self-association and interaction with eIF3.</title>
        <authorList>
            <person name="Methot N."/>
            <person name="Song M.S."/>
            <person name="Sonenberg N."/>
        </authorList>
    </citation>
    <scope>CHARACTERIZATION</scope>
</reference>
<reference key="12">
    <citation type="journal article" date="2004" name="EMBO J.">
        <title>Phosphorylation of eucaryotic translation initiation factor 4B Ser422 is modulated by S6 kinases.</title>
        <authorList>
            <person name="Raught B."/>
            <person name="Peiretti F."/>
            <person name="Gingras A.C."/>
            <person name="Livingstone M."/>
            <person name="Shahbazian D."/>
            <person name="Mayeur G.L."/>
            <person name="Polakiewicz R.D."/>
            <person name="Sonenberg N."/>
            <person name="Hershey J.W."/>
        </authorList>
    </citation>
    <scope>PHOSPHORYLATION AT SER-422</scope>
</reference>
<reference key="13">
    <citation type="journal article" date="2006" name="Cell">
        <title>Global, in vivo, and site-specific phosphorylation dynamics in signaling networks.</title>
        <authorList>
            <person name="Olsen J.V."/>
            <person name="Blagoev B."/>
            <person name="Gnad F."/>
            <person name="Macek B."/>
            <person name="Kumar C."/>
            <person name="Mortensen P."/>
            <person name="Mann M."/>
        </authorList>
    </citation>
    <scope>PHOSPHORYLATION [LARGE SCALE ANALYSIS] AT SER-406 AND SER-445</scope>
    <scope>IDENTIFICATION BY MASS SPECTROMETRY [LARGE SCALE ANALYSIS]</scope>
    <source>
        <tissue>Cervix carcinoma</tissue>
    </source>
</reference>
<reference key="14">
    <citation type="journal article" date="2006" name="EMBO J.">
        <title>The mTOR/PI3K and MAPK pathways converge on eIF4B to control its phosphorylation and activity.</title>
        <authorList>
            <person name="Shahbazian D."/>
            <person name="Roux P.P."/>
            <person name="Mieulet V."/>
            <person name="Cohen M.S."/>
            <person name="Raught B."/>
            <person name="Taunton J."/>
            <person name="Hershey J.W."/>
            <person name="Blenis J."/>
            <person name="Pende M."/>
            <person name="Sonenberg N."/>
        </authorList>
    </citation>
    <scope>PHOSPHORYLATION AT SER-422</scope>
</reference>
<reference key="15">
    <citation type="journal article" date="2006" name="Nat. Biotechnol.">
        <title>A probability-based approach for high-throughput protein phosphorylation analysis and site localization.</title>
        <authorList>
            <person name="Beausoleil S.A."/>
            <person name="Villen J."/>
            <person name="Gerber S.A."/>
            <person name="Rush J."/>
            <person name="Gygi S.P."/>
        </authorList>
    </citation>
    <scope>IDENTIFICATION BY MASS SPECTROMETRY [LARGE SCALE ANALYSIS]</scope>
    <source>
        <tissue>Cervix carcinoma</tissue>
    </source>
</reference>
<reference key="16">
    <citation type="journal article" date="2007" name="J. Proteome Res.">
        <title>Improved titanium dioxide enrichment of phosphopeptides from HeLa cells and high confident phosphopeptide identification by cross-validation of MS/MS and MS/MS/MS spectra.</title>
        <authorList>
            <person name="Yu L.R."/>
            <person name="Zhu Z."/>
            <person name="Chan K.C."/>
            <person name="Issaq H.J."/>
            <person name="Dimitrov D.S."/>
            <person name="Veenstra T.D."/>
        </authorList>
    </citation>
    <scope>IDENTIFICATION BY MASS SPECTROMETRY [LARGE SCALE ANALYSIS]</scope>
    <source>
        <tissue>Cervix carcinoma</tissue>
    </source>
</reference>
<reference key="17">
    <citation type="journal article" date="2008" name="Proc. Natl. Acad. Sci. U.S.A.">
        <title>A quantitative atlas of mitotic phosphorylation.</title>
        <authorList>
            <person name="Dephoure N."/>
            <person name="Zhou C."/>
            <person name="Villen J."/>
            <person name="Beausoleil S.A."/>
            <person name="Bakalarski C.E."/>
            <person name="Elledge S.J."/>
            <person name="Gygi S.P."/>
        </authorList>
    </citation>
    <scope>PHOSPHORYLATION [LARGE SCALE ANALYSIS] AT SER-93; SER-219; SER-283; SER-459 AND SER-597</scope>
    <scope>IDENTIFICATION BY MASS SPECTROMETRY [LARGE SCALE ANALYSIS]</scope>
    <source>
        <tissue>Cervix carcinoma</tissue>
    </source>
</reference>
<reference key="18">
    <citation type="journal article" date="2009" name="Anal. Chem.">
        <title>Lys-N and trypsin cover complementary parts of the phosphoproteome in a refined SCX-based approach.</title>
        <authorList>
            <person name="Gauci S."/>
            <person name="Helbig A.O."/>
            <person name="Slijper M."/>
            <person name="Krijgsveld J."/>
            <person name="Heck A.J."/>
            <person name="Mohammed S."/>
        </authorList>
    </citation>
    <scope>IDENTIFICATION BY MASS SPECTROMETRY [LARGE SCALE ANALYSIS]</scope>
</reference>
<reference key="19">
    <citation type="journal article" date="2009" name="Sci. Signal.">
        <title>Quantitative phosphoproteomic analysis of T cell receptor signaling reveals system-wide modulation of protein-protein interactions.</title>
        <authorList>
            <person name="Mayya V."/>
            <person name="Lundgren D.H."/>
            <person name="Hwang S.-I."/>
            <person name="Rezaul K."/>
            <person name="Wu L."/>
            <person name="Eng J.K."/>
            <person name="Rodionov V."/>
            <person name="Han D.K."/>
        </authorList>
    </citation>
    <scope>PHOSPHORYLATION [LARGE SCALE ANALYSIS] AT SER-597</scope>
    <scope>IDENTIFICATION BY MASS SPECTROMETRY [LARGE SCALE ANALYSIS]</scope>
    <source>
        <tissue>Leukemic T-cell</tissue>
    </source>
</reference>
<reference key="20">
    <citation type="journal article" date="2009" name="Science">
        <title>Lysine acetylation targets protein complexes and co-regulates major cellular functions.</title>
        <authorList>
            <person name="Choudhary C."/>
            <person name="Kumar C."/>
            <person name="Gnad F."/>
            <person name="Nielsen M.L."/>
            <person name="Rehman M."/>
            <person name="Walther T.C."/>
            <person name="Olsen J.V."/>
            <person name="Mann M."/>
        </authorList>
    </citation>
    <scope>ACETYLATION [LARGE SCALE ANALYSIS] AT LYS-586</scope>
    <scope>IDENTIFICATION BY MASS SPECTROMETRY [LARGE SCALE ANALYSIS]</scope>
</reference>
<reference key="21">
    <citation type="journal article" date="2010" name="Sci. Signal.">
        <title>Quantitative phosphoproteomics reveals widespread full phosphorylation site occupancy during mitosis.</title>
        <authorList>
            <person name="Olsen J.V."/>
            <person name="Vermeulen M."/>
            <person name="Santamaria A."/>
            <person name="Kumar C."/>
            <person name="Miller M.L."/>
            <person name="Jensen L.J."/>
            <person name="Gnad F."/>
            <person name="Cox J."/>
            <person name="Jensen T.S."/>
            <person name="Nigg E.A."/>
            <person name="Brunak S."/>
            <person name="Mann M."/>
        </authorList>
    </citation>
    <scope>PHOSPHORYLATION [LARGE SCALE ANALYSIS] AT SER-93; SER-192; SER-219; SER-406; SER-422; SER-445; SER-498; SER-504 AND SER-597</scope>
    <scope>IDENTIFICATION BY MASS SPECTROMETRY [LARGE SCALE ANALYSIS]</scope>
    <source>
        <tissue>Cervix carcinoma</tissue>
    </source>
</reference>
<reference key="22">
    <citation type="journal article" date="2011" name="BMC Syst. Biol.">
        <title>Initial characterization of the human central proteome.</title>
        <authorList>
            <person name="Burkard T.R."/>
            <person name="Planyavsky M."/>
            <person name="Kaupe I."/>
            <person name="Breitwieser F.P."/>
            <person name="Buerckstuemmer T."/>
            <person name="Bennett K.L."/>
            <person name="Superti-Furga G."/>
            <person name="Colinge J."/>
        </authorList>
    </citation>
    <scope>IDENTIFICATION BY MASS SPECTROMETRY [LARGE SCALE ANALYSIS]</scope>
</reference>
<reference key="23">
    <citation type="journal article" date="2011" name="Sci. Signal.">
        <title>System-wide temporal characterization of the proteome and phosphoproteome of human embryonic stem cell differentiation.</title>
        <authorList>
            <person name="Rigbolt K.T."/>
            <person name="Prokhorova T.A."/>
            <person name="Akimov V."/>
            <person name="Henningsen J."/>
            <person name="Johansen P.T."/>
            <person name="Kratchmarova I."/>
            <person name="Kassem M."/>
            <person name="Mann M."/>
            <person name="Olsen J.V."/>
            <person name="Blagoev B."/>
        </authorList>
    </citation>
    <scope>PHOSPHORYLATION [LARGE SCALE ANALYSIS] AT SER-406; THR-412; SER-418; SER-425; SER-445; SER-498; SER-504 AND SER-597</scope>
    <scope>IDENTIFICATION BY MASS SPECTROMETRY [LARGE SCALE ANALYSIS]</scope>
</reference>
<reference key="24">
    <citation type="journal article" date="2013" name="J. Proteome Res.">
        <title>Toward a comprehensive characterization of a human cancer cell phosphoproteome.</title>
        <authorList>
            <person name="Zhou H."/>
            <person name="Di Palma S."/>
            <person name="Preisinger C."/>
            <person name="Peng M."/>
            <person name="Polat A.N."/>
            <person name="Heck A.J."/>
            <person name="Mohammed S."/>
        </authorList>
    </citation>
    <scope>PHOSPHORYLATION [LARGE SCALE ANALYSIS] AT SER-93; SER-192; SER-207; SER-219; SER-359; SER-406; SER-409; SER-422 AND SER-597</scope>
    <scope>IDENTIFICATION BY MASS SPECTROMETRY [LARGE SCALE ANALYSIS]</scope>
    <source>
        <tissue>Cervix carcinoma</tissue>
        <tissue>Erythroleukemia</tissue>
    </source>
</reference>
<reference key="25">
    <citation type="journal article" date="2014" name="J. Proteomics">
        <title>An enzyme assisted RP-RPLC approach for in-depth analysis of human liver phosphoproteome.</title>
        <authorList>
            <person name="Bian Y."/>
            <person name="Song C."/>
            <person name="Cheng K."/>
            <person name="Dong M."/>
            <person name="Wang F."/>
            <person name="Huang J."/>
            <person name="Sun D."/>
            <person name="Wang L."/>
            <person name="Ye M."/>
            <person name="Zou H."/>
        </authorList>
    </citation>
    <scope>PHOSPHORYLATION [LARGE SCALE ANALYSIS] AT SER-422; SER-425; SER-459; SER-462; SER-498 AND SER-504</scope>
    <scope>IDENTIFICATION BY MASS SPECTROMETRY [LARGE SCALE ANALYSIS]</scope>
    <source>
        <tissue>Liver</tissue>
    </source>
</reference>
<reference key="26">
    <citation type="journal article" date="2017" name="Nat. Struct. Mol. Biol.">
        <title>Site-specific mapping of the human SUMO proteome reveals co-modification with phosphorylation.</title>
        <authorList>
            <person name="Hendriks I.A."/>
            <person name="Lyon D."/>
            <person name="Young C."/>
            <person name="Jensen L.J."/>
            <person name="Vertegaal A.C."/>
            <person name="Nielsen M.L."/>
        </authorList>
    </citation>
    <scope>SUMOYLATION [LARGE SCALE ANALYSIS] AT LYS-343</scope>
    <scope>IDENTIFICATION BY MASS SPECTROMETRY [LARGE SCALE ANALYSIS]</scope>
</reference>
<reference key="27">
    <citation type="journal article" date="2022" name="Mol. Cell">
        <title>The mTORC1-SLC4A7 axis stimulates bicarbonate import to enhance de novo nucleotide synthesis.</title>
        <authorList>
            <person name="Ali E.S."/>
            <person name="Liponska A."/>
            <person name="O'Hara B.P."/>
            <person name="Amici D.R."/>
            <person name="Torno M.D."/>
            <person name="Gao P."/>
            <person name="Asara J.M."/>
            <person name="Yap M.F."/>
            <person name="Mendillo M.L."/>
            <person name="Ben-Sahra I."/>
        </authorList>
    </citation>
    <scope>PHOSPHORYLATION AT SER-406 AND 422</scope>
    <scope>MUTAGENESIS OF SER-406 AND SER-422</scope>
</reference>
<reference key="28">
    <citation type="submission" date="2004-11" db="PDB data bank">
        <title>Solution structure of the RNA binding domain of eukaryotic initiation factor 4B.</title>
        <authorList>
            <consortium name="RIKEN structural genomics initiative (RSGI)"/>
        </authorList>
    </citation>
    <scope>STRUCTURE BY NMR OF 88-178</scope>
</reference>
<reference key="29">
    <citation type="journal article" date="2011" name="Nature">
        <title>Exome sequencing identifies frequent mutation of the SWI/SNF complex gene PBRM1 in renal carcinoma.</title>
        <authorList>
            <person name="Varela I."/>
            <person name="Tarpey P."/>
            <person name="Raine K."/>
            <person name="Huang D."/>
            <person name="Ong C.K."/>
            <person name="Stephens P."/>
            <person name="Davies H."/>
            <person name="Jones D."/>
            <person name="Lin M.L."/>
            <person name="Teague J."/>
            <person name="Bignell G."/>
            <person name="Butler A."/>
            <person name="Cho J."/>
            <person name="Dalgliesh G.L."/>
            <person name="Galappaththige D."/>
            <person name="Greenman C."/>
            <person name="Hardy C."/>
            <person name="Jia M."/>
            <person name="Latimer C."/>
            <person name="Lau K.W."/>
            <person name="Marshall J."/>
            <person name="McLaren S."/>
            <person name="Menzies A."/>
            <person name="Mudie L."/>
            <person name="Stebbings L."/>
            <person name="Largaespada D.A."/>
            <person name="Wessels L.F.A."/>
            <person name="Richard S."/>
            <person name="Kahnoski R.J."/>
            <person name="Anema J."/>
            <person name="Tuveson D.A."/>
            <person name="Perez-Mancera P.A."/>
            <person name="Mustonen V."/>
            <person name="Fischer A."/>
            <person name="Adams D.J."/>
            <person name="Rust A."/>
            <person name="Chan-On W."/>
            <person name="Subimerb C."/>
            <person name="Dykema K."/>
            <person name="Furge K."/>
            <person name="Campbell P.J."/>
            <person name="Teh B.T."/>
            <person name="Stratton M.R."/>
            <person name="Futreal P.A."/>
        </authorList>
    </citation>
    <scope>VARIANT ARG-203</scope>
</reference>